<organism>
    <name type="scientific">Saimiri sciureus</name>
    <name type="common">Common squirrel monkey</name>
    <dbReference type="NCBI Taxonomy" id="9521"/>
    <lineage>
        <taxon>Eukaryota</taxon>
        <taxon>Metazoa</taxon>
        <taxon>Chordata</taxon>
        <taxon>Craniata</taxon>
        <taxon>Vertebrata</taxon>
        <taxon>Euteleostomi</taxon>
        <taxon>Mammalia</taxon>
        <taxon>Eutheria</taxon>
        <taxon>Euarchontoglires</taxon>
        <taxon>Primates</taxon>
        <taxon>Haplorrhini</taxon>
        <taxon>Platyrrhini</taxon>
        <taxon>Cebidae</taxon>
        <taxon>Saimiriinae</taxon>
        <taxon>Saimiri</taxon>
    </lineage>
</organism>
<name>APOE_SAISC</name>
<reference key="1">
    <citation type="journal article" date="1996" name="FEBS Lett.">
        <title>Cerebrovascular amyloidosis in squirrel monkeys and rhesus monkeys: apolipoprotein E genotype.</title>
        <authorList>
            <person name="Morelli L."/>
            <person name="Wei L."/>
            <person name="Amorim A."/>
            <person name="McDermid J."/>
            <person name="Abee C.R."/>
            <person name="Frangione B."/>
            <person name="Walker L.C."/>
            <person name="Levy E."/>
        </authorList>
    </citation>
    <scope>NUCLEOTIDE SEQUENCE [MRNA]</scope>
</reference>
<protein>
    <recommendedName>
        <fullName>Apolipoprotein E</fullName>
        <shortName>Apo-E</shortName>
    </recommendedName>
</protein>
<keyword id="KW-0162">Chylomicron</keyword>
<keyword id="KW-0967">Endosome</keyword>
<keyword id="KW-0272">Extracellular matrix</keyword>
<keyword id="KW-0345">HDL</keyword>
<keyword id="KW-0358">Heparin-binding</keyword>
<keyword id="KW-0445">Lipid transport</keyword>
<keyword id="KW-0446">Lipid-binding</keyword>
<keyword id="KW-0558">Oxidation</keyword>
<keyword id="KW-0597">Phosphoprotein</keyword>
<keyword id="KW-0677">Repeat</keyword>
<keyword id="KW-0964">Secreted</keyword>
<keyword id="KW-0813">Transport</keyword>
<keyword id="KW-0850">VLDL</keyword>
<dbReference type="EMBL" id="U52029">
    <property type="protein sequence ID" value="AAC50442.1"/>
    <property type="molecule type" value="mRNA"/>
</dbReference>
<dbReference type="SMR" id="Q28995"/>
<dbReference type="GO" id="GO:0042627">
    <property type="term" value="C:chylomicron"/>
    <property type="evidence" value="ECO:0007669"/>
    <property type="project" value="UniProtKB-KW"/>
</dbReference>
<dbReference type="GO" id="GO:0070062">
    <property type="term" value="C:extracellular exosome"/>
    <property type="evidence" value="ECO:0000250"/>
    <property type="project" value="UniProtKB"/>
</dbReference>
<dbReference type="GO" id="GO:0031012">
    <property type="term" value="C:extracellular matrix"/>
    <property type="evidence" value="ECO:0000250"/>
    <property type="project" value="UniProtKB"/>
</dbReference>
<dbReference type="GO" id="GO:0005615">
    <property type="term" value="C:extracellular space"/>
    <property type="evidence" value="ECO:0000250"/>
    <property type="project" value="UniProtKB"/>
</dbReference>
<dbReference type="GO" id="GO:0034364">
    <property type="term" value="C:high-density lipoprotein particle"/>
    <property type="evidence" value="ECO:0000250"/>
    <property type="project" value="UniProtKB"/>
</dbReference>
<dbReference type="GO" id="GO:0034363">
    <property type="term" value="C:intermediate-density lipoprotein particle"/>
    <property type="evidence" value="ECO:0000250"/>
    <property type="project" value="UniProtKB"/>
</dbReference>
<dbReference type="GO" id="GO:0034362">
    <property type="term" value="C:low-density lipoprotein particle"/>
    <property type="evidence" value="ECO:0000250"/>
    <property type="project" value="UniProtKB"/>
</dbReference>
<dbReference type="GO" id="GO:0097487">
    <property type="term" value="C:multivesicular body, internal vesicle"/>
    <property type="evidence" value="ECO:0000250"/>
    <property type="project" value="UniProtKB"/>
</dbReference>
<dbReference type="GO" id="GO:0034361">
    <property type="term" value="C:very-low-density lipoprotein particle"/>
    <property type="evidence" value="ECO:0000250"/>
    <property type="project" value="UniProtKB"/>
</dbReference>
<dbReference type="GO" id="GO:0120020">
    <property type="term" value="F:cholesterol transfer activity"/>
    <property type="evidence" value="ECO:0007669"/>
    <property type="project" value="TreeGrafter"/>
</dbReference>
<dbReference type="GO" id="GO:0043395">
    <property type="term" value="F:heparan sulfate proteoglycan binding"/>
    <property type="evidence" value="ECO:0000250"/>
    <property type="project" value="UniProtKB"/>
</dbReference>
<dbReference type="GO" id="GO:0008201">
    <property type="term" value="F:heparin binding"/>
    <property type="evidence" value="ECO:0000250"/>
    <property type="project" value="UniProtKB"/>
</dbReference>
<dbReference type="GO" id="GO:0042802">
    <property type="term" value="F:identical protein binding"/>
    <property type="evidence" value="ECO:0000250"/>
    <property type="project" value="UniProtKB"/>
</dbReference>
<dbReference type="GO" id="GO:0050750">
    <property type="term" value="F:low-density lipoprotein particle receptor binding"/>
    <property type="evidence" value="ECO:0000250"/>
    <property type="project" value="UniProtKB"/>
</dbReference>
<dbReference type="GO" id="GO:0060228">
    <property type="term" value="F:phosphatidylcholine-sterol O-acyltransferase activator activity"/>
    <property type="evidence" value="ECO:0007669"/>
    <property type="project" value="TreeGrafter"/>
</dbReference>
<dbReference type="GO" id="GO:0005543">
    <property type="term" value="F:phospholipid binding"/>
    <property type="evidence" value="ECO:0007669"/>
    <property type="project" value="TreeGrafter"/>
</dbReference>
<dbReference type="GO" id="GO:0055090">
    <property type="term" value="P:acylglycerol homeostasis"/>
    <property type="evidence" value="ECO:0007669"/>
    <property type="project" value="TreeGrafter"/>
</dbReference>
<dbReference type="GO" id="GO:0033344">
    <property type="term" value="P:cholesterol efflux"/>
    <property type="evidence" value="ECO:0000250"/>
    <property type="project" value="UniProtKB"/>
</dbReference>
<dbReference type="GO" id="GO:0008203">
    <property type="term" value="P:cholesterol metabolic process"/>
    <property type="evidence" value="ECO:0007669"/>
    <property type="project" value="TreeGrafter"/>
</dbReference>
<dbReference type="GO" id="GO:0034382">
    <property type="term" value="P:chylomicron remnant clearance"/>
    <property type="evidence" value="ECO:0000250"/>
    <property type="project" value="UniProtKB"/>
</dbReference>
<dbReference type="GO" id="GO:0034380">
    <property type="term" value="P:high-density lipoprotein particle assembly"/>
    <property type="evidence" value="ECO:0000250"/>
    <property type="project" value="UniProtKB"/>
</dbReference>
<dbReference type="GO" id="GO:0071831">
    <property type="term" value="P:intermediate-density lipoprotein particle clearance"/>
    <property type="evidence" value="ECO:0000250"/>
    <property type="project" value="UniProtKB"/>
</dbReference>
<dbReference type="GO" id="GO:0042158">
    <property type="term" value="P:lipoprotein biosynthetic process"/>
    <property type="evidence" value="ECO:0000250"/>
    <property type="project" value="UniProtKB"/>
</dbReference>
<dbReference type="GO" id="GO:0032438">
    <property type="term" value="P:melanosome organization"/>
    <property type="evidence" value="ECO:0000250"/>
    <property type="project" value="UniProtKB"/>
</dbReference>
<dbReference type="GO" id="GO:1905907">
    <property type="term" value="P:negative regulation of amyloid fibril formation"/>
    <property type="evidence" value="ECO:0000250"/>
    <property type="project" value="UniProtKB"/>
</dbReference>
<dbReference type="GO" id="GO:0031175">
    <property type="term" value="P:neuron projection development"/>
    <property type="evidence" value="ECO:0000250"/>
    <property type="project" value="UniProtKB"/>
</dbReference>
<dbReference type="GO" id="GO:0033700">
    <property type="term" value="P:phospholipid efflux"/>
    <property type="evidence" value="ECO:0007669"/>
    <property type="project" value="TreeGrafter"/>
</dbReference>
<dbReference type="GO" id="GO:1900223">
    <property type="term" value="P:positive regulation of amyloid-beta clearance"/>
    <property type="evidence" value="ECO:0000250"/>
    <property type="project" value="UniProtKB"/>
</dbReference>
<dbReference type="GO" id="GO:0071830">
    <property type="term" value="P:triglyceride-rich lipoprotein particle clearance"/>
    <property type="evidence" value="ECO:0000250"/>
    <property type="project" value="UniProtKB"/>
</dbReference>
<dbReference type="GO" id="GO:0034447">
    <property type="term" value="P:very-low-density lipoprotein particle clearance"/>
    <property type="evidence" value="ECO:0000250"/>
    <property type="project" value="UniProtKB"/>
</dbReference>
<dbReference type="Gene3D" id="1.20.120.20">
    <property type="entry name" value="Apolipoprotein"/>
    <property type="match status" value="1"/>
</dbReference>
<dbReference type="InterPro" id="IPR000074">
    <property type="entry name" value="ApoA_E"/>
</dbReference>
<dbReference type="InterPro" id="IPR050163">
    <property type="entry name" value="Apolipoprotein_A1/A4/E"/>
</dbReference>
<dbReference type="PANTHER" id="PTHR18976">
    <property type="entry name" value="APOLIPOPROTEIN"/>
    <property type="match status" value="1"/>
</dbReference>
<dbReference type="PANTHER" id="PTHR18976:SF2">
    <property type="entry name" value="APOLIPOPROTEIN E"/>
    <property type="match status" value="1"/>
</dbReference>
<dbReference type="Pfam" id="PF01442">
    <property type="entry name" value="Apolipoprotein"/>
    <property type="match status" value="1"/>
</dbReference>
<dbReference type="SUPFAM" id="SSF47162">
    <property type="entry name" value="Apolipoprotein"/>
    <property type="match status" value="1"/>
</dbReference>
<comment type="function">
    <text evidence="1">APOE is an apolipoprotein, a protein associating with lipid particles, that mainly functions in lipoprotein-mediated lipid transport between organs via the plasma and interstitial fluids. APOE is a core component of plasma lipoproteins and is involved in their production, conversion and clearance. Apolipoproteins are amphipathic molecules that interact both with lipids of the lipoprotein particle core and the aqueous environment of the plasma. As such, APOE associates with chylomicrons, chylomicron remnants, very low density lipoproteins (VLDL) and intermediate density lipoproteins (IDL) but shows a preferential binding to high-density lipoproteins (HDL). It also binds a wide range of cellular receptors including the LDL receptor/LDLR, the LDL receptor-related proteins LRP1, LRP2 and LRP8 and the very low-density lipoprotein receptor/VLDLR that mediate the cellular uptake of the APOE-containing lipoprotein particles. Finally, APOE also has a heparin-binding activity and binds heparan-sulfate proteoglycans on the surface of cells, a property that supports the capture and the receptor-mediated uptake of APOE-containing lipoproteins by cells. A main function of APOE is to mediate lipoprotein clearance through the uptake of chylomicrons, VLDLs, and HDLs by hepatocytes. APOE is also involved in the biosynthesis by the liver of VLDLs as well as their uptake by peripheral tissues ensuring the delivery of triglycerides and energy storage in muscle, heart and adipose tissues. By participating in the lipoprotein-mediated distribution of lipids among tissues, APOE plays a critical role in plasma and tissues lipid homeostasis. APOE is also involved in two steps of reverse cholesterol transport, the HDLs-mediated transport of cholesterol from peripheral tissues to the liver, and thereby plays an important role in cholesterol homeostasis. First, it is functionally associated with ABCA1 in the biogenesis of HDLs in tissues. Second, it is enriched in circulating HDLs and mediates their uptake by hepatocytes. APOE also plays an important role in lipid transport in the central nervous system, regulating neuron survival and sprouting.</text>
</comment>
<comment type="subunit">
    <text evidence="1">Homotetramer. May interact with ABCA1; functionally associated with ABCA1 in the biogenesis of HDLs. May interact with APP/A4 amyloid-beta peptide; the interaction is extremely stable in vitro but its physiological significance is unclear. May interact with MAPT. May interact with MAP2. In the cerebrospinal fluid, interacts with secreted SORL1. Interacts with PMEL; this allows the loading of PMEL luminal fragment on ILVs to induce fibril nucleation.</text>
</comment>
<comment type="subcellular location">
    <subcellularLocation>
        <location evidence="1">Secreted</location>
    </subcellularLocation>
    <subcellularLocation>
        <location evidence="1">Secreted</location>
        <location evidence="1">Extracellular space</location>
    </subcellularLocation>
    <subcellularLocation>
        <location evidence="1">Secreted</location>
        <location evidence="1">Extracellular space</location>
        <location evidence="1">Extracellular matrix</location>
    </subcellularLocation>
    <subcellularLocation>
        <location evidence="1">Extracellular vesicle</location>
    </subcellularLocation>
    <subcellularLocation>
        <location evidence="1">Endosome</location>
        <location evidence="1">Multivesicular body</location>
    </subcellularLocation>
    <text evidence="1">In the plasma, APOE is associated with chylomicrons, chylomicrons remnants, VLDL, LDL and HDL lipoproteins. Lipid poor oligomeric APOE is associated with the extracellular matrix in a calcium- and heparan-sulfate proteoglycans-dependent manner. Lipidation induces the release from the extracellular matrix. Colocalizes with CD63 and PMEL at exosomes and in intraluminal vesicles within multivesicular endosomes.</text>
</comment>
<comment type="PTM">
    <text evidence="1">APOE exists as multiple glycosylated and sialylated glycoforms within cells and in plasma. The extent of glycosylation and sialylation are tissue and context specific.</text>
</comment>
<comment type="PTM">
    <text evidence="1">Glycated in plasma VLDL.</text>
</comment>
<comment type="PTM">
    <text evidence="1">Phosphorylated by FAM20C in the extracellular medium.</text>
</comment>
<comment type="similarity">
    <text evidence="3">Belongs to the apolipoprotein A1/A4/E family.</text>
</comment>
<accession>Q28995</accession>
<feature type="chain" id="PRO_0000191638" description="Apolipoprotein E">
    <location>
        <begin position="1" status="less than"/>
        <end position="107" status="greater than"/>
    </location>
</feature>
<feature type="repeat" description="1">
    <location>
        <begin position="11"/>
        <end position="32"/>
    </location>
</feature>
<feature type="repeat" description="2">
    <location>
        <begin position="33"/>
        <end position="54"/>
    </location>
</feature>
<feature type="repeat" description="3">
    <location>
        <begin position="55"/>
        <end position="76"/>
    </location>
</feature>
<feature type="repeat" description="4">
    <location>
        <begin position="77"/>
        <end position="98"/>
    </location>
</feature>
<feature type="repeat" description="5">
    <location>
        <begin position="99"/>
        <end position="107" status="greater than"/>
    </location>
</feature>
<feature type="region of interest" description="5 X 22 AA approximate tandem repeats">
    <location>
        <begin position="11"/>
        <end position="107" status="greater than"/>
    </location>
</feature>
<feature type="region of interest" description="LDL and other lipoprotein receptors binding" evidence="1">
    <location>
        <begin position="89"/>
        <end position="99"/>
    </location>
</feature>
<feature type="binding site" evidence="1">
    <location>
        <begin position="93"/>
        <end position="96"/>
    </location>
    <ligand>
        <name>heparin</name>
        <dbReference type="ChEBI" id="CHEBI:28304"/>
    </ligand>
</feature>
<feature type="modified residue" description="Methionine sulfoxide" evidence="2">
    <location>
        <position position="74"/>
    </location>
</feature>
<feature type="modified residue" description="Phosphoserine" evidence="1">
    <location>
        <position position="78"/>
    </location>
</feature>
<feature type="non-terminal residue">
    <location>
        <position position="1"/>
    </location>
</feature>
<feature type="non-terminal residue">
    <location>
        <position position="107"/>
    </location>
</feature>
<evidence type="ECO:0000250" key="1">
    <source>
        <dbReference type="UniProtKB" id="P02649"/>
    </source>
</evidence>
<evidence type="ECO:0000250" key="2">
    <source>
        <dbReference type="UniProtKB" id="P08226"/>
    </source>
</evidence>
<evidence type="ECO:0000305" key="3"/>
<gene>
    <name type="primary">APOE</name>
</gene>
<proteinExistence type="evidence at transcript level"/>
<sequence>LSSQVTQELTALMDETMKELKAYKSELEEQLSPVAEETRARLSKELQAAQARLGADMEDVRSRLAQYRSEVQAMLGQSTDELRARLASHLRKLRKRLLRDVDDLQKR</sequence>